<evidence type="ECO:0000255" key="1">
    <source>
        <dbReference type="HAMAP-Rule" id="MF_00363"/>
    </source>
</evidence>
<reference key="1">
    <citation type="journal article" date="2010" name="Genome Biol.">
        <title>Structure and dynamics of the pan-genome of Streptococcus pneumoniae and closely related species.</title>
        <authorList>
            <person name="Donati C."/>
            <person name="Hiller N.L."/>
            <person name="Tettelin H."/>
            <person name="Muzzi A."/>
            <person name="Croucher N.J."/>
            <person name="Angiuoli S.V."/>
            <person name="Oggioni M."/>
            <person name="Dunning Hotopp J.C."/>
            <person name="Hu F.Z."/>
            <person name="Riley D.R."/>
            <person name="Covacci A."/>
            <person name="Mitchell T.J."/>
            <person name="Bentley S.D."/>
            <person name="Kilian M."/>
            <person name="Ehrlich G.D."/>
            <person name="Rappuoli R."/>
            <person name="Moxon E.R."/>
            <person name="Masignani V."/>
        </authorList>
    </citation>
    <scope>NUCLEOTIDE SEQUENCE [LARGE SCALE GENOMIC DNA]</scope>
    <source>
        <strain>P1031</strain>
    </source>
</reference>
<dbReference type="EMBL" id="CP000920">
    <property type="protein sequence ID" value="ACO20471.1"/>
    <property type="molecule type" value="Genomic_DNA"/>
</dbReference>
<dbReference type="RefSeq" id="WP_000364990.1">
    <property type="nucleotide sequence ID" value="NC_012467.1"/>
</dbReference>
<dbReference type="SMR" id="C1CMJ2"/>
<dbReference type="KEGG" id="spp:SPP_1882"/>
<dbReference type="HOGENOM" id="CLU_180108_0_0_9"/>
<dbReference type="GO" id="GO:0005886">
    <property type="term" value="C:plasma membrane"/>
    <property type="evidence" value="ECO:0007669"/>
    <property type="project" value="UniProtKB-SubCell"/>
</dbReference>
<dbReference type="HAMAP" id="MF_00363">
    <property type="entry name" value="UPF0154"/>
    <property type="match status" value="1"/>
</dbReference>
<dbReference type="InterPro" id="IPR005359">
    <property type="entry name" value="UPF0154"/>
</dbReference>
<dbReference type="Pfam" id="PF03672">
    <property type="entry name" value="UPF0154"/>
    <property type="match status" value="1"/>
</dbReference>
<sequence>MDLLLAIVLIVLAFLGGALGGMYLVRKQIEKEFADNPRLNAEAVRTLLSANGQKPSEAKVQQVYHQIIRQQKAALANNKKKK</sequence>
<gene>
    <name type="ordered locus">SPP_1882</name>
</gene>
<proteinExistence type="inferred from homology"/>
<accession>C1CMJ2</accession>
<feature type="chain" id="PRO_1000197733" description="UPF0154 protein SPP_1882">
    <location>
        <begin position="1"/>
        <end position="82"/>
    </location>
</feature>
<feature type="transmembrane region" description="Helical" evidence="1">
    <location>
        <begin position="5"/>
        <end position="25"/>
    </location>
</feature>
<organism>
    <name type="scientific">Streptococcus pneumoniae (strain P1031)</name>
    <dbReference type="NCBI Taxonomy" id="488223"/>
    <lineage>
        <taxon>Bacteria</taxon>
        <taxon>Bacillati</taxon>
        <taxon>Bacillota</taxon>
        <taxon>Bacilli</taxon>
        <taxon>Lactobacillales</taxon>
        <taxon>Streptococcaceae</taxon>
        <taxon>Streptococcus</taxon>
    </lineage>
</organism>
<comment type="subcellular location">
    <subcellularLocation>
        <location evidence="1">Cell membrane</location>
        <topology evidence="1">Single-pass membrane protein</topology>
    </subcellularLocation>
</comment>
<comment type="similarity">
    <text evidence="1">Belongs to the UPF0154 family.</text>
</comment>
<keyword id="KW-1003">Cell membrane</keyword>
<keyword id="KW-0472">Membrane</keyword>
<keyword id="KW-0812">Transmembrane</keyword>
<keyword id="KW-1133">Transmembrane helix</keyword>
<protein>
    <recommendedName>
        <fullName evidence="1">UPF0154 protein SPP_1882</fullName>
    </recommendedName>
</protein>
<name>Y1882_STRZP</name>